<gene>
    <name type="primary">Idh3g</name>
</gene>
<name>IDHG1_RAT</name>
<feature type="transit peptide" description="Mitochondrion" evidence="1">
    <location>
        <begin position="1"/>
        <end position="39"/>
    </location>
</feature>
<feature type="chain" id="PRO_0000014452" description="Isocitrate dehydrogenase [NAD] subunit gamma 1, mitochondrial">
    <location>
        <begin position="40"/>
        <end position="393"/>
    </location>
</feature>
<feature type="binding site" evidence="2">
    <location>
        <position position="120"/>
    </location>
    <ligand>
        <name>citrate</name>
        <dbReference type="ChEBI" id="CHEBI:16947"/>
        <note>allosteric activator</note>
    </ligand>
</feature>
<feature type="binding site" evidence="2">
    <location>
        <position position="133"/>
    </location>
    <ligand>
        <name>citrate</name>
        <dbReference type="ChEBI" id="CHEBI:16947"/>
        <note>allosteric activator</note>
    </ligand>
</feature>
<feature type="binding site" evidence="2">
    <location>
        <position position="136"/>
    </location>
    <ligand>
        <name>substrate</name>
    </ligand>
</feature>
<feature type="binding site" evidence="2">
    <location>
        <position position="167"/>
    </location>
    <ligand>
        <name>substrate</name>
    </ligand>
</feature>
<feature type="binding site" evidence="2">
    <location>
        <position position="254"/>
    </location>
    <ligand>
        <name>Mn(2+)</name>
        <dbReference type="ChEBI" id="CHEBI:29035"/>
        <note>ligand shared with catalytic subunit</note>
    </ligand>
</feature>
<feature type="binding site" evidence="2">
    <location>
        <position position="254"/>
    </location>
    <ligand>
        <name>substrate</name>
    </ligand>
</feature>
<feature type="binding site" evidence="2">
    <location>
        <position position="312"/>
    </location>
    <ligand>
        <name>ADP</name>
        <dbReference type="ChEBI" id="CHEBI:456216"/>
        <note>allosteric activator</note>
    </ligand>
</feature>
<feature type="binding site" evidence="2">
    <location>
        <position position="313"/>
    </location>
    <ligand>
        <name>ADP</name>
        <dbReference type="ChEBI" id="CHEBI:456216"/>
        <note>allosteric activator</note>
    </ligand>
</feature>
<feature type="binding site" evidence="2">
    <location>
        <position position="324"/>
    </location>
    <ligand>
        <name>ADP</name>
        <dbReference type="ChEBI" id="CHEBI:456216"/>
        <note>allosteric activator</note>
    </ligand>
</feature>
<feature type="modified residue" description="Phosphoserine" evidence="5">
    <location>
        <position position="130"/>
    </location>
</feature>
<feature type="modified residue" description="N6-acetyllysine" evidence="3">
    <location>
        <position position="206"/>
    </location>
</feature>
<feature type="modified residue" description="N6-succinyllysine" evidence="3">
    <location>
        <position position="226"/>
    </location>
</feature>
<feature type="sequence conflict" description="In Ref. 2; CAA52225." evidence="4" ref="2">
    <original>I</original>
    <variation>V</variation>
    <location>
        <position position="7"/>
    </location>
</feature>
<protein>
    <recommendedName>
        <fullName>Isocitrate dehydrogenase [NAD] subunit gamma 1, mitochondrial</fullName>
    </recommendedName>
    <alternativeName>
        <fullName>Isocitric dehydrogenase subunit gamma</fullName>
    </alternativeName>
    <alternativeName>
        <fullName>NAD(+)-specific ICDH subunit gamma</fullName>
    </alternativeName>
</protein>
<keyword id="KW-0007">Acetylation</keyword>
<keyword id="KW-0067">ATP-binding</keyword>
<keyword id="KW-0460">Magnesium</keyword>
<keyword id="KW-0464">Manganese</keyword>
<keyword id="KW-0479">Metal-binding</keyword>
<keyword id="KW-0496">Mitochondrion</keyword>
<keyword id="KW-0547">Nucleotide-binding</keyword>
<keyword id="KW-0597">Phosphoprotein</keyword>
<keyword id="KW-1185">Reference proteome</keyword>
<keyword id="KW-0809">Transit peptide</keyword>
<keyword id="KW-0816">Tricarboxylic acid cycle</keyword>
<comment type="function">
    <text evidence="2">Regulatory subunit which plays a role in the allosteric regulation of the enzyme catalyzing the decarboxylation of isocitrate (ICT) into alpha-ketoglutarate. The heterodimer composed of the alpha (IDH3A) and beta (IDH3B) subunits and the heterodimer composed of the alpha (IDH3A) and gamma (IDH3G) subunits, have considerable basal activity but the full activity of the heterotetramer (containing two subunits of IDH3A, one of IDH3B and one of IDH3G) requires the assembly and cooperative function of both heterodimers.</text>
</comment>
<comment type="cofactor">
    <cofactor evidence="2">
        <name>Mg(2+)</name>
        <dbReference type="ChEBI" id="CHEBI:18420"/>
    </cofactor>
    <cofactor evidence="2">
        <name>Mn(2+)</name>
        <dbReference type="ChEBI" id="CHEBI:29035"/>
    </cofactor>
    <text evidence="2">Divalent metal cations; Mn(2+) or Mg(2+). Activity higher in presence of Mn(2+) than of Mg(2+). Binds 1 Mg(2+) or Mn(2+) ion per subunit.</text>
</comment>
<comment type="activity regulation">
    <text evidence="2">The heterotetramer and the heterodimer composed of IDH3A and IDH3G subunits can be allosterically activated by citrate (CIT) or/and ADP, and the two activators can act independently or synergistically. The heterodimer composed of IDH3A and IDH3B subunits cannot be allosterically regulated and the allosteric regulation of the heterotetramer is through the IDH3G subunit and not the IDH3B subunit. The IDH3G subunit contains the allosteric site which consists of a CIT-binding site and an ADP-binding site, and the binding of CIT and ADP causes conformational changes at the allosteric site which are transmitted to the active site in the catalytic subunit (IDH3A) through a cascade of conformational changes at the heterodimer interface, leading to stabilization of the isocitrate-binding at the active site and thus activation of the enzyme. ATP can activate the heterotetramer and the heterodimer composed of IDH3A and IDH3G subunits at low concentrations but inhibits their activities at high concentrations, whereas ATP exhibits only inhibitory effect on the heterodimer composed of IDH3A and IDH3B subunits.</text>
</comment>
<comment type="subunit">
    <text evidence="2">Heterooligomer of subunits alpha (IDH3A), beta (IDH3B), and gamma (IDH3G) in the apparent ratio of 2:1:1. The heterodimer containing one IDH3A and one IDH3B subunit and the heterodimer containing one IDH3A and one IDH3G subunit assemble into a heterotetramer (which contains two subunits of IDH3A, one of IDH3B and one of IDH3G) and further into the heterooctamer.</text>
</comment>
<comment type="subcellular location">
    <subcellularLocation>
        <location evidence="1">Mitochondrion</location>
    </subcellularLocation>
</comment>
<comment type="similarity">
    <text evidence="4">Belongs to the isocitrate and isopropylmalate dehydrogenases family.</text>
</comment>
<sequence length="393" mass="42851">MALKVAIAAGSAAKAIFKPALLCRPWEVLAAHEAPRRSISSQQTIPPSAKYGGRHTVTMIPGDGIGPELMLHVKSVFRHACVPVDFEEVHVSSNADEEDIRNAIMAIRRNRVALKGNIETNHDLPPSHKSRNNILRTSLDLYANVIHCKSLPGVVTRHKDIDILIVRENTEGEYSSLEHESVAGVVESLKIITKAKSLRIAEYAFKLAQESGRKKVTAVHKANIMKLGDGLFLQCCREVAARYPQITFDSMIVDNTTMQLVSRPQQFDVMVMPNLYGNIVNNVCAGLVGGPGLVAGANYGHVYAVFETATRNTGKSIANKNIANPTATLLASCMMLDHLKLHSYATSIRKAVLASMDNENMHTPDIGGQGTTSQAIQDIIRHIRIINGRAVEA</sequence>
<organism>
    <name type="scientific">Rattus norvegicus</name>
    <name type="common">Rat</name>
    <dbReference type="NCBI Taxonomy" id="10116"/>
    <lineage>
        <taxon>Eukaryota</taxon>
        <taxon>Metazoa</taxon>
        <taxon>Chordata</taxon>
        <taxon>Craniata</taxon>
        <taxon>Vertebrata</taxon>
        <taxon>Euteleostomi</taxon>
        <taxon>Mammalia</taxon>
        <taxon>Eutheria</taxon>
        <taxon>Euarchontoglires</taxon>
        <taxon>Glires</taxon>
        <taxon>Rodentia</taxon>
        <taxon>Myomorpha</taxon>
        <taxon>Muroidea</taxon>
        <taxon>Muridae</taxon>
        <taxon>Murinae</taxon>
        <taxon>Rattus</taxon>
    </lineage>
</organism>
<evidence type="ECO:0000250" key="1"/>
<evidence type="ECO:0000250" key="2">
    <source>
        <dbReference type="UniProtKB" id="P51553"/>
    </source>
</evidence>
<evidence type="ECO:0000250" key="3">
    <source>
        <dbReference type="UniProtKB" id="P70404"/>
    </source>
</evidence>
<evidence type="ECO:0000305" key="4"/>
<evidence type="ECO:0007744" key="5">
    <source>
    </source>
</evidence>
<dbReference type="EMBL" id="U63009">
    <property type="protein sequence ID" value="AAC53341.1"/>
    <property type="molecule type" value="Genomic_DNA"/>
</dbReference>
<dbReference type="EMBL" id="X74125">
    <property type="protein sequence ID" value="CAA52225.1"/>
    <property type="molecule type" value="mRNA"/>
</dbReference>
<dbReference type="PIR" id="S39064">
    <property type="entry name" value="S39064"/>
</dbReference>
<dbReference type="SMR" id="P41565"/>
<dbReference type="ComplexPortal" id="CPX-557">
    <property type="entry name" value="Mitochondrial isocitrate dehydrogenase complex (NAD+)"/>
</dbReference>
<dbReference type="FunCoup" id="P41565">
    <property type="interactions" value="1758"/>
</dbReference>
<dbReference type="IntAct" id="P41565">
    <property type="interactions" value="1"/>
</dbReference>
<dbReference type="MINT" id="P41565"/>
<dbReference type="STRING" id="10116.ENSRNOP00000073128"/>
<dbReference type="iPTMnet" id="P41565"/>
<dbReference type="PhosphoSitePlus" id="P41565"/>
<dbReference type="jPOST" id="P41565"/>
<dbReference type="PaxDb" id="10116-ENSRNOP00000053220"/>
<dbReference type="AGR" id="RGD:2863"/>
<dbReference type="RGD" id="2863">
    <property type="gene designation" value="Idh3g"/>
</dbReference>
<dbReference type="eggNOG" id="KOG0784">
    <property type="taxonomic scope" value="Eukaryota"/>
</dbReference>
<dbReference type="InParanoid" id="P41565"/>
<dbReference type="PhylomeDB" id="P41565"/>
<dbReference type="Reactome" id="R-RNO-71403">
    <property type="pathway name" value="Citric acid cycle (TCA cycle)"/>
</dbReference>
<dbReference type="SABIO-RK" id="P41565"/>
<dbReference type="PRO" id="PR:P41565"/>
<dbReference type="Proteomes" id="UP000002494">
    <property type="component" value="Unplaced"/>
</dbReference>
<dbReference type="GO" id="GO:0045242">
    <property type="term" value="C:isocitrate dehydrogenase complex (NAD+)"/>
    <property type="evidence" value="ECO:0000266"/>
    <property type="project" value="RGD"/>
</dbReference>
<dbReference type="GO" id="GO:0005739">
    <property type="term" value="C:mitochondrion"/>
    <property type="evidence" value="ECO:0000250"/>
    <property type="project" value="UniProtKB"/>
</dbReference>
<dbReference type="GO" id="GO:0005524">
    <property type="term" value="F:ATP binding"/>
    <property type="evidence" value="ECO:0007669"/>
    <property type="project" value="UniProtKB-KW"/>
</dbReference>
<dbReference type="GO" id="GO:0008047">
    <property type="term" value="F:enzyme activator activity"/>
    <property type="evidence" value="ECO:0000266"/>
    <property type="project" value="RGD"/>
</dbReference>
<dbReference type="GO" id="GO:0004449">
    <property type="term" value="F:isocitrate dehydrogenase (NAD+) activity"/>
    <property type="evidence" value="ECO:0000250"/>
    <property type="project" value="UniProtKB"/>
</dbReference>
<dbReference type="GO" id="GO:0000287">
    <property type="term" value="F:magnesium ion binding"/>
    <property type="evidence" value="ECO:0000250"/>
    <property type="project" value="UniProtKB"/>
</dbReference>
<dbReference type="GO" id="GO:0051287">
    <property type="term" value="F:NAD binding"/>
    <property type="evidence" value="ECO:0007669"/>
    <property type="project" value="InterPro"/>
</dbReference>
<dbReference type="GO" id="GO:0006102">
    <property type="term" value="P:isocitrate metabolic process"/>
    <property type="evidence" value="ECO:0000250"/>
    <property type="project" value="UniProtKB"/>
</dbReference>
<dbReference type="GO" id="GO:0006099">
    <property type="term" value="P:tricarboxylic acid cycle"/>
    <property type="evidence" value="ECO:0000266"/>
    <property type="project" value="RGD"/>
</dbReference>
<dbReference type="FunFam" id="3.40.718.10:FF:000011">
    <property type="entry name" value="Isocitrate dehydrogenase [NAD] subunit, mitochondrial"/>
    <property type="match status" value="1"/>
</dbReference>
<dbReference type="Gene3D" id="3.40.718.10">
    <property type="entry name" value="Isopropylmalate Dehydrogenase"/>
    <property type="match status" value="1"/>
</dbReference>
<dbReference type="InterPro" id="IPR019818">
    <property type="entry name" value="IsoCit/isopropylmalate_DH_CS"/>
</dbReference>
<dbReference type="InterPro" id="IPR004434">
    <property type="entry name" value="Isocitrate_DH_NAD"/>
</dbReference>
<dbReference type="InterPro" id="IPR024084">
    <property type="entry name" value="IsoPropMal-DH-like_dom"/>
</dbReference>
<dbReference type="NCBIfam" id="TIGR00175">
    <property type="entry name" value="mito_nad_idh"/>
    <property type="match status" value="1"/>
</dbReference>
<dbReference type="PANTHER" id="PTHR11835">
    <property type="entry name" value="DECARBOXYLATING DEHYDROGENASES-ISOCITRATE, ISOPROPYLMALATE, TARTRATE"/>
    <property type="match status" value="1"/>
</dbReference>
<dbReference type="PANTHER" id="PTHR11835:SF78">
    <property type="entry name" value="ISOCITRATE DEHYDROGENASE [NAD] SUBUNIT GAMMA, MITOCHONDRIAL"/>
    <property type="match status" value="1"/>
</dbReference>
<dbReference type="Pfam" id="PF00180">
    <property type="entry name" value="Iso_dh"/>
    <property type="match status" value="1"/>
</dbReference>
<dbReference type="SMART" id="SM01329">
    <property type="entry name" value="Iso_dh"/>
    <property type="match status" value="1"/>
</dbReference>
<dbReference type="SUPFAM" id="SSF53659">
    <property type="entry name" value="Isocitrate/Isopropylmalate dehydrogenase-like"/>
    <property type="match status" value="1"/>
</dbReference>
<dbReference type="PROSITE" id="PS00470">
    <property type="entry name" value="IDH_IMDH"/>
    <property type="match status" value="1"/>
</dbReference>
<accession>P41565</accession>
<accession>P70577</accession>
<reference key="1">
    <citation type="journal article" date="1997" name="Genomics">
        <title>Genomic organization of two novel genes on human Xq28: compact head to head arrangement of IDH gamma and TRAP delta is conserved in rat and mouse.</title>
        <authorList>
            <person name="Brenner V."/>
            <person name="Nyakatura G."/>
            <person name="Rosenthal A."/>
            <person name="Platzer M."/>
        </authorList>
    </citation>
    <scope>NUCLEOTIDE SEQUENCE [GENOMIC DNA] OF 1-24</scope>
    <source>
        <strain>HAN/WIST</strain>
    </source>
</reference>
<reference key="2">
    <citation type="journal article" date="1993" name="Biochem. J.">
        <title>Molecular cloning and deduced amino acid sequences of the gamma-subunits of rat and monkey NAD(+)-isocitrate dehydrogenases.</title>
        <authorList>
            <person name="Nichols B.J."/>
            <person name="Hall L."/>
            <person name="Perry A.C.F."/>
            <person name="Denton R.M."/>
        </authorList>
    </citation>
    <scope>NUCLEOTIDE SEQUENCE [GENOMIC DNA] OF 6-393</scope>
    <source>
        <strain>Wistar</strain>
        <tissue>Epididymis</tissue>
    </source>
</reference>
<reference key="3">
    <citation type="journal article" date="2012" name="Nat. Commun.">
        <title>Quantitative maps of protein phosphorylation sites across 14 different rat organs and tissues.</title>
        <authorList>
            <person name="Lundby A."/>
            <person name="Secher A."/>
            <person name="Lage K."/>
            <person name="Nordsborg N.B."/>
            <person name="Dmytriyev A."/>
            <person name="Lundby C."/>
            <person name="Olsen J.V."/>
        </authorList>
    </citation>
    <scope>PHOSPHORYLATION [LARGE SCALE ANALYSIS] AT SER-130</scope>
    <scope>IDENTIFICATION BY MASS SPECTROMETRY [LARGE SCALE ANALYSIS]</scope>
</reference>
<proteinExistence type="evidence at protein level"/>